<proteinExistence type="inferred from homology"/>
<name>TILS_STRP6</name>
<feature type="chain" id="PRO_0000181782" description="tRNA(Ile)-lysidine synthase">
    <location>
        <begin position="1"/>
        <end position="428"/>
    </location>
</feature>
<feature type="binding site" evidence="1">
    <location>
        <begin position="28"/>
        <end position="33"/>
    </location>
    <ligand>
        <name>ATP</name>
        <dbReference type="ChEBI" id="CHEBI:30616"/>
    </ligand>
</feature>
<protein>
    <recommendedName>
        <fullName evidence="1">tRNA(Ile)-lysidine synthase</fullName>
        <ecNumber evidence="1">6.3.4.19</ecNumber>
    </recommendedName>
    <alternativeName>
        <fullName evidence="1">tRNA(Ile)-2-lysyl-cytidine synthase</fullName>
    </alternativeName>
    <alternativeName>
        <fullName evidence="1">tRNA(Ile)-lysidine synthetase</fullName>
    </alternativeName>
</protein>
<accession>Q5XEL7</accession>
<comment type="function">
    <text evidence="1">Ligates lysine onto the cytidine present at position 34 of the AUA codon-specific tRNA(Ile) that contains the anticodon CAU, in an ATP-dependent manner. Cytidine is converted to lysidine, thus changing the amino acid specificity of the tRNA from methionine to isoleucine.</text>
</comment>
<comment type="catalytic activity">
    <reaction evidence="1">
        <text>cytidine(34) in tRNA(Ile2) + L-lysine + ATP = lysidine(34) in tRNA(Ile2) + AMP + diphosphate + H(+)</text>
        <dbReference type="Rhea" id="RHEA:43744"/>
        <dbReference type="Rhea" id="RHEA-COMP:10625"/>
        <dbReference type="Rhea" id="RHEA-COMP:10670"/>
        <dbReference type="ChEBI" id="CHEBI:15378"/>
        <dbReference type="ChEBI" id="CHEBI:30616"/>
        <dbReference type="ChEBI" id="CHEBI:32551"/>
        <dbReference type="ChEBI" id="CHEBI:33019"/>
        <dbReference type="ChEBI" id="CHEBI:82748"/>
        <dbReference type="ChEBI" id="CHEBI:83665"/>
        <dbReference type="ChEBI" id="CHEBI:456215"/>
        <dbReference type="EC" id="6.3.4.19"/>
    </reaction>
</comment>
<comment type="subcellular location">
    <subcellularLocation>
        <location evidence="1">Cytoplasm</location>
    </subcellularLocation>
</comment>
<comment type="domain">
    <text>The N-terminal region contains the highly conserved SGGXDS motif, predicted to be a P-loop motif involved in ATP binding.</text>
</comment>
<comment type="similarity">
    <text evidence="1">Belongs to the tRNA(Ile)-lysidine synthase family.</text>
</comment>
<keyword id="KW-0067">ATP-binding</keyword>
<keyword id="KW-0963">Cytoplasm</keyword>
<keyword id="KW-0436">Ligase</keyword>
<keyword id="KW-0547">Nucleotide-binding</keyword>
<keyword id="KW-0819">tRNA processing</keyword>
<gene>
    <name evidence="1" type="primary">tilS</name>
    <name type="ordered locus">M6_Spy0011</name>
</gene>
<evidence type="ECO:0000255" key="1">
    <source>
        <dbReference type="HAMAP-Rule" id="MF_01161"/>
    </source>
</evidence>
<sequence>MMTYQEIFNEIKNKAYFKNHRHVLIAVSGGVDSMNLLHFLYLFQDKLKIRIGIAHVNHKQRSESDSEEAYLKCWAKKHDIPIYVSNFEGIFSEKAARDWRYAFFKSIMLKNNYSALVTAHHSDDQAETILMRLIRGSRLRHLSGIKSVQPFANGQLIRPFLTFSKKDLPEIFHFEDSSNRELSFLRNRVRNNYLPLLKQENPRFIQGLNQLALENSLLFQAFKELTNHITTTDLTEFNEQSKSIQYFLLQDYLEGFPDLDLKKSQFTQLLQIIQIAKQGYYYLKKDYYIFIDKFSFKITKIVPKTELVKEEKMLEYDSNLCYRDYYFSFMPKSNEDQGQVNIPLFSLSSIKLRSRQSGDYISFGHFSKKIRRLFIDEKFTIAERQNAIVGEQDGEIIFVLVGDKTYLRKACKHDIMLAKLYIDKLEKG</sequence>
<dbReference type="EC" id="6.3.4.19" evidence="1"/>
<dbReference type="EMBL" id="CP000003">
    <property type="protein sequence ID" value="AAT86146.1"/>
    <property type="molecule type" value="Genomic_DNA"/>
</dbReference>
<dbReference type="RefSeq" id="WP_011184044.1">
    <property type="nucleotide sequence ID" value="NC_006086.1"/>
</dbReference>
<dbReference type="SMR" id="Q5XEL7"/>
<dbReference type="KEGG" id="spa:M6_Spy0011"/>
<dbReference type="HOGENOM" id="CLU_018869_0_2_9"/>
<dbReference type="Proteomes" id="UP000001167">
    <property type="component" value="Chromosome"/>
</dbReference>
<dbReference type="GO" id="GO:0005737">
    <property type="term" value="C:cytoplasm"/>
    <property type="evidence" value="ECO:0007669"/>
    <property type="project" value="UniProtKB-SubCell"/>
</dbReference>
<dbReference type="GO" id="GO:0005524">
    <property type="term" value="F:ATP binding"/>
    <property type="evidence" value="ECO:0007669"/>
    <property type="project" value="UniProtKB-UniRule"/>
</dbReference>
<dbReference type="GO" id="GO:0032267">
    <property type="term" value="F:tRNA(Ile)-lysidine synthase activity"/>
    <property type="evidence" value="ECO:0007669"/>
    <property type="project" value="UniProtKB-EC"/>
</dbReference>
<dbReference type="GO" id="GO:0006400">
    <property type="term" value="P:tRNA modification"/>
    <property type="evidence" value="ECO:0007669"/>
    <property type="project" value="UniProtKB-UniRule"/>
</dbReference>
<dbReference type="CDD" id="cd01992">
    <property type="entry name" value="TilS_N"/>
    <property type="match status" value="1"/>
</dbReference>
<dbReference type="Gene3D" id="3.40.50.620">
    <property type="entry name" value="HUPs"/>
    <property type="match status" value="1"/>
</dbReference>
<dbReference type="HAMAP" id="MF_01161">
    <property type="entry name" value="tRNA_Ile_lys_synt"/>
    <property type="match status" value="1"/>
</dbReference>
<dbReference type="InterPro" id="IPR012796">
    <property type="entry name" value="Lysidine-tRNA-synth_C"/>
</dbReference>
<dbReference type="InterPro" id="IPR014729">
    <property type="entry name" value="Rossmann-like_a/b/a_fold"/>
</dbReference>
<dbReference type="InterPro" id="IPR011063">
    <property type="entry name" value="TilS/TtcA_N"/>
</dbReference>
<dbReference type="InterPro" id="IPR012094">
    <property type="entry name" value="tRNA_Ile_lys_synt"/>
</dbReference>
<dbReference type="InterPro" id="IPR012795">
    <property type="entry name" value="tRNA_Ile_lys_synt_N"/>
</dbReference>
<dbReference type="NCBIfam" id="TIGR02433">
    <property type="entry name" value="lysidine_TilS_C"/>
    <property type="match status" value="1"/>
</dbReference>
<dbReference type="NCBIfam" id="TIGR02432">
    <property type="entry name" value="lysidine_TilS_N"/>
    <property type="match status" value="1"/>
</dbReference>
<dbReference type="PANTHER" id="PTHR43033">
    <property type="entry name" value="TRNA(ILE)-LYSIDINE SYNTHASE-RELATED"/>
    <property type="match status" value="1"/>
</dbReference>
<dbReference type="PANTHER" id="PTHR43033:SF1">
    <property type="entry name" value="TRNA(ILE)-LYSIDINE SYNTHASE-RELATED"/>
    <property type="match status" value="1"/>
</dbReference>
<dbReference type="Pfam" id="PF01171">
    <property type="entry name" value="ATP_bind_3"/>
    <property type="match status" value="1"/>
</dbReference>
<dbReference type="SUPFAM" id="SSF52402">
    <property type="entry name" value="Adenine nucleotide alpha hydrolases-like"/>
    <property type="match status" value="1"/>
</dbReference>
<reference key="1">
    <citation type="journal article" date="2004" name="J. Infect. Dis.">
        <title>Progress toward characterization of the group A Streptococcus metagenome: complete genome sequence of a macrolide-resistant serotype M6 strain.</title>
        <authorList>
            <person name="Banks D.J."/>
            <person name="Porcella S.F."/>
            <person name="Barbian K.D."/>
            <person name="Beres S.B."/>
            <person name="Philips L.E."/>
            <person name="Voyich J.M."/>
            <person name="DeLeo F.R."/>
            <person name="Martin J.M."/>
            <person name="Somerville G.A."/>
            <person name="Musser J.M."/>
        </authorList>
    </citation>
    <scope>NUCLEOTIDE SEQUENCE [LARGE SCALE GENOMIC DNA]</scope>
    <source>
        <strain>ATCC BAA-946 / MGAS10394</strain>
    </source>
</reference>
<organism>
    <name type="scientific">Streptococcus pyogenes serotype M6 (strain ATCC BAA-946 / MGAS10394)</name>
    <dbReference type="NCBI Taxonomy" id="286636"/>
    <lineage>
        <taxon>Bacteria</taxon>
        <taxon>Bacillati</taxon>
        <taxon>Bacillota</taxon>
        <taxon>Bacilli</taxon>
        <taxon>Lactobacillales</taxon>
        <taxon>Streptococcaceae</taxon>
        <taxon>Streptococcus</taxon>
    </lineage>
</organism>